<gene>
    <name evidence="1" type="primary">hdfR</name>
    <name type="ordered locus">EC55989_4237</name>
</gene>
<organism>
    <name type="scientific">Escherichia coli (strain 55989 / EAEC)</name>
    <dbReference type="NCBI Taxonomy" id="585055"/>
    <lineage>
        <taxon>Bacteria</taxon>
        <taxon>Pseudomonadati</taxon>
        <taxon>Pseudomonadota</taxon>
        <taxon>Gammaproteobacteria</taxon>
        <taxon>Enterobacterales</taxon>
        <taxon>Enterobacteriaceae</taxon>
        <taxon>Escherichia</taxon>
    </lineage>
</organism>
<feature type="chain" id="PRO_1000164985" description="HTH-type transcriptional regulator HdfR">
    <location>
        <begin position="1"/>
        <end position="279"/>
    </location>
</feature>
<feature type="domain" description="HTH lysR-type" evidence="1">
    <location>
        <begin position="1"/>
        <end position="58"/>
    </location>
</feature>
<feature type="DNA-binding region" description="H-T-H motif" evidence="1">
    <location>
        <begin position="18"/>
        <end position="37"/>
    </location>
</feature>
<protein>
    <recommendedName>
        <fullName evidence="1">HTH-type transcriptional regulator HdfR</fullName>
    </recommendedName>
    <alternativeName>
        <fullName evidence="1">H-NS-dependent flhDC regulator</fullName>
    </alternativeName>
</protein>
<keyword id="KW-0238">DNA-binding</keyword>
<keyword id="KW-1185">Reference proteome</keyword>
<keyword id="KW-0678">Repressor</keyword>
<keyword id="KW-0804">Transcription</keyword>
<keyword id="KW-0805">Transcription regulation</keyword>
<sequence>MDTELLKTFLEVSRTRHFGRAAESLYLTQSAVSFRIRQLENQLGVNLFTRHRNNIRLTAAGEKLLPYAETLMSTWQAARKEVAHTSRHNEFSIGASASLWECMLNQWLGRLYQNQDAHTGLQFEARIAQRQSLVKQLHERQLDLLITTEAPKMDEFSSQLLGYFTLALYTSAPSKLKGDLNYLRLEWGPDFQQHEAGLIGADEVPILTTSSAELAQQQIAMLNGCTWLPVSWARKKGGLHTVVDSTTLSRPLYAIWLQNSDKNTLIRDLLKINVLDEVY</sequence>
<name>HDFR_ECO55</name>
<reference key="1">
    <citation type="journal article" date="2009" name="PLoS Genet.">
        <title>Organised genome dynamics in the Escherichia coli species results in highly diverse adaptive paths.</title>
        <authorList>
            <person name="Touchon M."/>
            <person name="Hoede C."/>
            <person name="Tenaillon O."/>
            <person name="Barbe V."/>
            <person name="Baeriswyl S."/>
            <person name="Bidet P."/>
            <person name="Bingen E."/>
            <person name="Bonacorsi S."/>
            <person name="Bouchier C."/>
            <person name="Bouvet O."/>
            <person name="Calteau A."/>
            <person name="Chiapello H."/>
            <person name="Clermont O."/>
            <person name="Cruveiller S."/>
            <person name="Danchin A."/>
            <person name="Diard M."/>
            <person name="Dossat C."/>
            <person name="Karoui M.E."/>
            <person name="Frapy E."/>
            <person name="Garry L."/>
            <person name="Ghigo J.M."/>
            <person name="Gilles A.M."/>
            <person name="Johnson J."/>
            <person name="Le Bouguenec C."/>
            <person name="Lescat M."/>
            <person name="Mangenot S."/>
            <person name="Martinez-Jehanne V."/>
            <person name="Matic I."/>
            <person name="Nassif X."/>
            <person name="Oztas S."/>
            <person name="Petit M.A."/>
            <person name="Pichon C."/>
            <person name="Rouy Z."/>
            <person name="Ruf C.S."/>
            <person name="Schneider D."/>
            <person name="Tourret J."/>
            <person name="Vacherie B."/>
            <person name="Vallenet D."/>
            <person name="Medigue C."/>
            <person name="Rocha E.P.C."/>
            <person name="Denamur E."/>
        </authorList>
    </citation>
    <scope>NUCLEOTIDE SEQUENCE [LARGE SCALE GENOMIC DNA]</scope>
    <source>
        <strain>55989 / EAEC</strain>
    </source>
</reference>
<comment type="function">
    <text evidence="1">Negatively regulates the transcription of the flagellar master operon flhDC by binding to the upstream region of the operon.</text>
</comment>
<comment type="similarity">
    <text evidence="2">Belongs to the LysR transcriptional regulatory family.</text>
</comment>
<proteinExistence type="inferred from homology"/>
<evidence type="ECO:0000255" key="1">
    <source>
        <dbReference type="HAMAP-Rule" id="MF_01233"/>
    </source>
</evidence>
<evidence type="ECO:0000305" key="2"/>
<dbReference type="EMBL" id="CU928145">
    <property type="protein sequence ID" value="CAV00859.1"/>
    <property type="molecule type" value="Genomic_DNA"/>
</dbReference>
<dbReference type="RefSeq" id="WP_000379246.1">
    <property type="nucleotide sequence ID" value="NC_011748.1"/>
</dbReference>
<dbReference type="SMR" id="B7L8A6"/>
<dbReference type="GeneID" id="75204755"/>
<dbReference type="KEGG" id="eck:EC55989_4237"/>
<dbReference type="HOGENOM" id="CLU_039613_8_2_6"/>
<dbReference type="Proteomes" id="UP000000746">
    <property type="component" value="Chromosome"/>
</dbReference>
<dbReference type="GO" id="GO:0003677">
    <property type="term" value="F:DNA binding"/>
    <property type="evidence" value="ECO:0007669"/>
    <property type="project" value="UniProtKB-KW"/>
</dbReference>
<dbReference type="GO" id="GO:0003700">
    <property type="term" value="F:DNA-binding transcription factor activity"/>
    <property type="evidence" value="ECO:0007669"/>
    <property type="project" value="UniProtKB-UniRule"/>
</dbReference>
<dbReference type="GO" id="GO:0045892">
    <property type="term" value="P:negative regulation of DNA-templated transcription"/>
    <property type="evidence" value="ECO:0007669"/>
    <property type="project" value="UniProtKB-UniRule"/>
</dbReference>
<dbReference type="FunFam" id="1.10.10.10:FF:000001">
    <property type="entry name" value="LysR family transcriptional regulator"/>
    <property type="match status" value="1"/>
</dbReference>
<dbReference type="Gene3D" id="3.40.190.10">
    <property type="entry name" value="Periplasmic binding protein-like II"/>
    <property type="match status" value="2"/>
</dbReference>
<dbReference type="Gene3D" id="1.10.10.10">
    <property type="entry name" value="Winged helix-like DNA-binding domain superfamily/Winged helix DNA-binding domain"/>
    <property type="match status" value="1"/>
</dbReference>
<dbReference type="HAMAP" id="MF_01233">
    <property type="entry name" value="HTH_type_HdfR"/>
    <property type="match status" value="1"/>
</dbReference>
<dbReference type="InterPro" id="IPR050176">
    <property type="entry name" value="LTTR"/>
</dbReference>
<dbReference type="InterPro" id="IPR005119">
    <property type="entry name" value="LysR_subst-bd"/>
</dbReference>
<dbReference type="InterPro" id="IPR020890">
    <property type="entry name" value="Tscrpt_reg_HTH_HdfR"/>
</dbReference>
<dbReference type="InterPro" id="IPR000847">
    <property type="entry name" value="Tscrpt_reg_HTH_LysR"/>
</dbReference>
<dbReference type="InterPro" id="IPR036388">
    <property type="entry name" value="WH-like_DNA-bd_sf"/>
</dbReference>
<dbReference type="InterPro" id="IPR036390">
    <property type="entry name" value="WH_DNA-bd_sf"/>
</dbReference>
<dbReference type="NCBIfam" id="NF002946">
    <property type="entry name" value="PRK03601.1"/>
    <property type="match status" value="1"/>
</dbReference>
<dbReference type="PANTHER" id="PTHR30579:SF8">
    <property type="entry name" value="HTH-TYPE TRANSCRIPTIONAL REGULATOR HDFR"/>
    <property type="match status" value="1"/>
</dbReference>
<dbReference type="PANTHER" id="PTHR30579">
    <property type="entry name" value="TRANSCRIPTIONAL REGULATOR"/>
    <property type="match status" value="1"/>
</dbReference>
<dbReference type="Pfam" id="PF00126">
    <property type="entry name" value="HTH_1"/>
    <property type="match status" value="1"/>
</dbReference>
<dbReference type="Pfam" id="PF03466">
    <property type="entry name" value="LysR_substrate"/>
    <property type="match status" value="1"/>
</dbReference>
<dbReference type="PRINTS" id="PR00039">
    <property type="entry name" value="HTHLYSR"/>
</dbReference>
<dbReference type="SUPFAM" id="SSF53850">
    <property type="entry name" value="Periplasmic binding protein-like II"/>
    <property type="match status" value="1"/>
</dbReference>
<dbReference type="SUPFAM" id="SSF46785">
    <property type="entry name" value="Winged helix' DNA-binding domain"/>
    <property type="match status" value="1"/>
</dbReference>
<dbReference type="PROSITE" id="PS50931">
    <property type="entry name" value="HTH_LYSR"/>
    <property type="match status" value="1"/>
</dbReference>
<accession>B7L8A6</accession>